<proteinExistence type="evidence at protein level"/>
<feature type="chain" id="PRO_0000438829" description="Basic leucine zipper 4">
    <location>
        <begin position="1"/>
        <end position="148"/>
    </location>
</feature>
<feature type="domain" description="bZIP" evidence="1">
    <location>
        <begin position="48"/>
        <end position="97"/>
    </location>
</feature>
<feature type="region of interest" description="Basic motif" evidence="1">
    <location>
        <begin position="50"/>
        <end position="72"/>
    </location>
</feature>
<feature type="region of interest" description="Disordered" evidence="2">
    <location>
        <begin position="50"/>
        <end position="70"/>
    </location>
</feature>
<feature type="region of interest" description="Leucine-zipper" evidence="1">
    <location>
        <begin position="76"/>
        <end position="90"/>
    </location>
</feature>
<feature type="sequence conflict" description="In Ref. 4; AEM36360." evidence="5" ref="4">
    <original>D</original>
    <variation>E</variation>
    <location>
        <position position="33"/>
    </location>
</feature>
<comment type="function">
    <text evidence="3">Probable transcription factor involved in somatic embryogenesis. Acts as a positive regulator of BHLH109.</text>
</comment>
<comment type="interaction">
    <interactant intactId="EBI-942986">
        <id>Q9LQ65</id>
    </interactant>
    <interactant intactId="EBI-1998580">
        <id>Q8VZI9</id>
        <label>ENAP1</label>
    </interactant>
    <organismsDiffer>false</organismsDiffer>
    <experiments>3</experiments>
</comment>
<comment type="subcellular location">
    <subcellularLocation>
        <location evidence="1">Nucleus</location>
    </subcellularLocation>
</comment>
<comment type="sequence caution" evidence="5">
    <conflict type="erroneous termination">
        <sequence resource="EMBL-CDS" id="ABK28443"/>
    </conflict>
    <text>Extended C-terminus.</text>
</comment>
<sequence>MFYTNMETVHNCFNDATITGDEIIDILAFLQSDESDNPSGINEVVPVDDKKRRRTISNRESAKRSRMKKKKRFEELTEEVNRLNIRNQELKNRLANVVSCGNFISRENNRLKTESVCLEIRLLELYRFLVAMQSPISTSVNYITTLEI</sequence>
<dbReference type="EMBL" id="AF400619">
    <property type="protein sequence ID" value="AAK94023.1"/>
    <property type="molecule type" value="mRNA"/>
</dbReference>
<dbReference type="EMBL" id="AC009317">
    <property type="protein sequence ID" value="AAF79745.1"/>
    <property type="molecule type" value="Genomic_DNA"/>
</dbReference>
<dbReference type="EMBL" id="AC027036">
    <property type="protein sequence ID" value="AAK62790.1"/>
    <property type="molecule type" value="Genomic_DNA"/>
</dbReference>
<dbReference type="EMBL" id="CP002684">
    <property type="protein sequence ID" value="AEE33584.1"/>
    <property type="molecule type" value="Genomic_DNA"/>
</dbReference>
<dbReference type="EMBL" id="JN389445">
    <property type="protein sequence ID" value="AEM36360.1"/>
    <property type="molecule type" value="Genomic_DNA"/>
</dbReference>
<dbReference type="EMBL" id="DQ446373">
    <property type="protein sequence ID" value="ABE65722.1"/>
    <property type="molecule type" value="mRNA"/>
</dbReference>
<dbReference type="EMBL" id="DQ652903">
    <property type="protein sequence ID" value="ABK28443.1"/>
    <property type="status" value="ALT_SEQ"/>
    <property type="molecule type" value="mRNA"/>
</dbReference>
<dbReference type="EMBL" id="AB493509">
    <property type="protein sequence ID" value="BAH30347.1"/>
    <property type="molecule type" value="mRNA"/>
</dbReference>
<dbReference type="RefSeq" id="NP_176162.1">
    <property type="nucleotide sequence ID" value="NM_104646.2"/>
</dbReference>
<dbReference type="SMR" id="Q9LQ65"/>
<dbReference type="FunCoup" id="Q9LQ65">
    <property type="interactions" value="10"/>
</dbReference>
<dbReference type="IntAct" id="Q9LQ65">
    <property type="interactions" value="19"/>
</dbReference>
<dbReference type="STRING" id="3702.Q9LQ65"/>
<dbReference type="iPTMnet" id="Q9LQ65"/>
<dbReference type="PaxDb" id="3702-AT1G59530.1"/>
<dbReference type="EnsemblPlants" id="AT1G59530.1">
    <property type="protein sequence ID" value="AT1G59530.1"/>
    <property type="gene ID" value="AT1G59530"/>
</dbReference>
<dbReference type="GeneID" id="842243"/>
<dbReference type="Gramene" id="AT1G59530.1">
    <property type="protein sequence ID" value="AT1G59530.1"/>
    <property type="gene ID" value="AT1G59530"/>
</dbReference>
<dbReference type="KEGG" id="ath:AT1G59530"/>
<dbReference type="Araport" id="AT1G59530"/>
<dbReference type="TAIR" id="AT1G59530">
    <property type="gene designation" value="BZIP4"/>
</dbReference>
<dbReference type="eggNOG" id="ENOG502S218">
    <property type="taxonomic scope" value="Eukaryota"/>
</dbReference>
<dbReference type="HOGENOM" id="CLU_148986_0_0_1"/>
<dbReference type="InParanoid" id="Q9LQ65"/>
<dbReference type="OMA" id="AVINQYH"/>
<dbReference type="OrthoDB" id="551672at2759"/>
<dbReference type="PhylomeDB" id="Q9LQ65"/>
<dbReference type="PRO" id="PR:Q9LQ65"/>
<dbReference type="Proteomes" id="UP000006548">
    <property type="component" value="Chromosome 1"/>
</dbReference>
<dbReference type="ExpressionAtlas" id="Q9LQ65">
    <property type="expression patterns" value="baseline and differential"/>
</dbReference>
<dbReference type="GO" id="GO:0005634">
    <property type="term" value="C:nucleus"/>
    <property type="evidence" value="ECO:0007669"/>
    <property type="project" value="UniProtKB-SubCell"/>
</dbReference>
<dbReference type="GO" id="GO:0003677">
    <property type="term" value="F:DNA binding"/>
    <property type="evidence" value="ECO:0007669"/>
    <property type="project" value="UniProtKB-KW"/>
</dbReference>
<dbReference type="GO" id="GO:0003700">
    <property type="term" value="F:DNA-binding transcription factor activity"/>
    <property type="evidence" value="ECO:0000250"/>
    <property type="project" value="TAIR"/>
</dbReference>
<dbReference type="FunFam" id="1.20.5.170:FF:000020">
    <property type="entry name" value="BZIP transcription factor"/>
    <property type="match status" value="1"/>
</dbReference>
<dbReference type="Gene3D" id="1.20.5.170">
    <property type="match status" value="1"/>
</dbReference>
<dbReference type="InterPro" id="IPR004827">
    <property type="entry name" value="bZIP"/>
</dbReference>
<dbReference type="InterPro" id="IPR046347">
    <property type="entry name" value="bZIP_sf"/>
</dbReference>
<dbReference type="PANTHER" id="PTHR45764:SF52">
    <property type="entry name" value="BASIC LEUCINE ZIPPER 4"/>
    <property type="match status" value="1"/>
</dbReference>
<dbReference type="PANTHER" id="PTHR45764">
    <property type="entry name" value="BZIP TRANSCRIPTION FACTOR 44"/>
    <property type="match status" value="1"/>
</dbReference>
<dbReference type="Pfam" id="PF00170">
    <property type="entry name" value="bZIP_1"/>
    <property type="match status" value="1"/>
</dbReference>
<dbReference type="SMART" id="SM00338">
    <property type="entry name" value="BRLZ"/>
    <property type="match status" value="1"/>
</dbReference>
<dbReference type="SUPFAM" id="SSF57959">
    <property type="entry name" value="Leucine zipper domain"/>
    <property type="match status" value="1"/>
</dbReference>
<dbReference type="PROSITE" id="PS50217">
    <property type="entry name" value="BZIP"/>
    <property type="match status" value="1"/>
</dbReference>
<dbReference type="PROSITE" id="PS00036">
    <property type="entry name" value="BZIP_BASIC"/>
    <property type="match status" value="1"/>
</dbReference>
<reference key="1">
    <citation type="submission" date="2001-07" db="EMBL/GenBank/DDBJ databases">
        <title>AtbZIP4, a transcription factor in Arabidopsis thaliana.</title>
        <authorList>
            <person name="Wang X."/>
            <person name="Droege-Laser W."/>
        </authorList>
    </citation>
    <scope>NUCLEOTIDE SEQUENCE [MRNA]</scope>
</reference>
<reference key="2">
    <citation type="journal article" date="2000" name="Nature">
        <title>Sequence and analysis of chromosome 1 of the plant Arabidopsis thaliana.</title>
        <authorList>
            <person name="Theologis A."/>
            <person name="Ecker J.R."/>
            <person name="Palm C.J."/>
            <person name="Federspiel N.A."/>
            <person name="Kaul S."/>
            <person name="White O."/>
            <person name="Alonso J."/>
            <person name="Altafi H."/>
            <person name="Araujo R."/>
            <person name="Bowman C.L."/>
            <person name="Brooks S.Y."/>
            <person name="Buehler E."/>
            <person name="Chan A."/>
            <person name="Chao Q."/>
            <person name="Chen H."/>
            <person name="Cheuk R.F."/>
            <person name="Chin C.W."/>
            <person name="Chung M.K."/>
            <person name="Conn L."/>
            <person name="Conway A.B."/>
            <person name="Conway A.R."/>
            <person name="Creasy T.H."/>
            <person name="Dewar K."/>
            <person name="Dunn P."/>
            <person name="Etgu P."/>
            <person name="Feldblyum T.V."/>
            <person name="Feng J.-D."/>
            <person name="Fong B."/>
            <person name="Fujii C.Y."/>
            <person name="Gill J.E."/>
            <person name="Goldsmith A.D."/>
            <person name="Haas B."/>
            <person name="Hansen N.F."/>
            <person name="Hughes B."/>
            <person name="Huizar L."/>
            <person name="Hunter J.L."/>
            <person name="Jenkins J."/>
            <person name="Johnson-Hopson C."/>
            <person name="Khan S."/>
            <person name="Khaykin E."/>
            <person name="Kim C.J."/>
            <person name="Koo H.L."/>
            <person name="Kremenetskaia I."/>
            <person name="Kurtz D.B."/>
            <person name="Kwan A."/>
            <person name="Lam B."/>
            <person name="Langin-Hooper S."/>
            <person name="Lee A."/>
            <person name="Lee J.M."/>
            <person name="Lenz C.A."/>
            <person name="Li J.H."/>
            <person name="Li Y.-P."/>
            <person name="Lin X."/>
            <person name="Liu S.X."/>
            <person name="Liu Z.A."/>
            <person name="Luros J.S."/>
            <person name="Maiti R."/>
            <person name="Marziali A."/>
            <person name="Militscher J."/>
            <person name="Miranda M."/>
            <person name="Nguyen M."/>
            <person name="Nierman W.C."/>
            <person name="Osborne B.I."/>
            <person name="Pai G."/>
            <person name="Peterson J."/>
            <person name="Pham P.K."/>
            <person name="Rizzo M."/>
            <person name="Rooney T."/>
            <person name="Rowley D."/>
            <person name="Sakano H."/>
            <person name="Salzberg S.L."/>
            <person name="Schwartz J.R."/>
            <person name="Shinn P."/>
            <person name="Southwick A.M."/>
            <person name="Sun H."/>
            <person name="Tallon L.J."/>
            <person name="Tambunga G."/>
            <person name="Toriumi M.J."/>
            <person name="Town C.D."/>
            <person name="Utterback T."/>
            <person name="Van Aken S."/>
            <person name="Vaysberg M."/>
            <person name="Vysotskaia V.S."/>
            <person name="Walker M."/>
            <person name="Wu D."/>
            <person name="Yu G."/>
            <person name="Fraser C.M."/>
            <person name="Venter J.C."/>
            <person name="Davis R.W."/>
        </authorList>
    </citation>
    <scope>NUCLEOTIDE SEQUENCE [LARGE SCALE GENOMIC DNA]</scope>
    <source>
        <strain>cv. Columbia</strain>
    </source>
</reference>
<reference key="3">
    <citation type="journal article" date="2017" name="Plant J.">
        <title>Araport11: a complete reannotation of the Arabidopsis thaliana reference genome.</title>
        <authorList>
            <person name="Cheng C.Y."/>
            <person name="Krishnakumar V."/>
            <person name="Chan A.P."/>
            <person name="Thibaud-Nissen F."/>
            <person name="Schobel S."/>
            <person name="Town C.D."/>
        </authorList>
    </citation>
    <scope>GENOME REANNOTATION</scope>
    <source>
        <strain>cv. Columbia</strain>
    </source>
</reference>
<reference key="4">
    <citation type="journal article" date="2011" name="Plant Physiol.">
        <title>Genome-wide comparison of nucleotide-binding site-leucine-rich repeat-encoding genes in Arabidopsis.</title>
        <authorList>
            <person name="Guo Y.-L."/>
            <person name="Fitz J."/>
            <person name="Schneeberger K."/>
            <person name="Ossowski S."/>
            <person name="Cao J."/>
            <person name="Weigel D."/>
        </authorList>
    </citation>
    <scope>NUCLEOTIDE SEQUENCE [LARGE SCALE GENOMIC DNA]</scope>
    <source>
        <strain>cv. Cvi-0</strain>
    </source>
</reference>
<reference key="5">
    <citation type="journal article" date="2006" name="Plant Biotechnol. J.">
        <title>Simultaneous high-throughput recombinational cloning of open reading frames in closed and open configurations.</title>
        <authorList>
            <person name="Underwood B.A."/>
            <person name="Vanderhaeghen R."/>
            <person name="Whitford R."/>
            <person name="Town C.D."/>
            <person name="Hilson P."/>
        </authorList>
    </citation>
    <scope>NUCLEOTIDE SEQUENCE [LARGE SCALE MRNA]</scope>
    <source>
        <strain>cv. Columbia</strain>
    </source>
</reference>
<reference key="6">
    <citation type="submission" date="2009-03" db="EMBL/GenBank/DDBJ databases">
        <title>ORF cloning and analysis of Arabidopsis transcription factor genes.</title>
        <authorList>
            <person name="Fujita M."/>
            <person name="Mizukado S."/>
            <person name="Seki M."/>
            <person name="Shinozaki K."/>
            <person name="Mitsuda N."/>
            <person name="Takiguchi Y."/>
            <person name="Takagi M."/>
        </authorList>
    </citation>
    <scope>NUCLEOTIDE SEQUENCE [LARGE SCALE MRNA]</scope>
</reference>
<reference key="7">
    <citation type="journal article" date="2002" name="Trends Plant Sci.">
        <title>bZIP transcription factors in Arabidopsis.</title>
        <authorList>
            <person name="Jakoby M."/>
            <person name="Weisshaar B."/>
            <person name="Droege-Laser W."/>
            <person name="Vicente-Carbajosa J."/>
            <person name="Tiedemann J."/>
            <person name="Kroj T."/>
            <person name="Parcy F."/>
        </authorList>
    </citation>
    <scope>GENE FAMILY</scope>
    <scope>NOMENCLATURE</scope>
</reference>
<reference key="8">
    <citation type="journal article" date="2016" name="J. Plant Physiol.">
        <title>Stress-related function of bHLH109 in somatic embryo induction in Arabidopsis.</title>
        <authorList>
            <person name="Nowak K."/>
            <person name="Gaj M.D."/>
        </authorList>
    </citation>
    <scope>FUNCTION</scope>
</reference>
<keyword id="KW-0238">DNA-binding</keyword>
<keyword id="KW-0539">Nucleus</keyword>
<keyword id="KW-1185">Reference proteome</keyword>
<keyword id="KW-0804">Transcription</keyword>
<keyword id="KW-0805">Transcription regulation</keyword>
<name>BZIP4_ARATH</name>
<accession>Q9LQ65</accession>
<accession>A0MED3</accession>
<accession>G1JSJ2</accession>
<evidence type="ECO:0000255" key="1">
    <source>
        <dbReference type="PROSITE-ProRule" id="PRU00978"/>
    </source>
</evidence>
<evidence type="ECO:0000256" key="2">
    <source>
        <dbReference type="SAM" id="MobiDB-lite"/>
    </source>
</evidence>
<evidence type="ECO:0000269" key="3">
    <source>
    </source>
</evidence>
<evidence type="ECO:0000303" key="4">
    <source>
    </source>
</evidence>
<evidence type="ECO:0000305" key="5"/>
<evidence type="ECO:0000312" key="6">
    <source>
        <dbReference type="Araport" id="AT1G59530"/>
    </source>
</evidence>
<evidence type="ECO:0000312" key="7">
    <source>
        <dbReference type="EMBL" id="AAK62790.1"/>
    </source>
</evidence>
<protein>
    <recommendedName>
        <fullName evidence="4">Basic leucine zipper 4</fullName>
        <shortName evidence="4">AtbZIP4</shortName>
    </recommendedName>
</protein>
<organism>
    <name type="scientific">Arabidopsis thaliana</name>
    <name type="common">Mouse-ear cress</name>
    <dbReference type="NCBI Taxonomy" id="3702"/>
    <lineage>
        <taxon>Eukaryota</taxon>
        <taxon>Viridiplantae</taxon>
        <taxon>Streptophyta</taxon>
        <taxon>Embryophyta</taxon>
        <taxon>Tracheophyta</taxon>
        <taxon>Spermatophyta</taxon>
        <taxon>Magnoliopsida</taxon>
        <taxon>eudicotyledons</taxon>
        <taxon>Gunneridae</taxon>
        <taxon>Pentapetalae</taxon>
        <taxon>rosids</taxon>
        <taxon>malvids</taxon>
        <taxon>Brassicales</taxon>
        <taxon>Brassicaceae</taxon>
        <taxon>Camelineae</taxon>
        <taxon>Arabidopsis</taxon>
    </lineage>
</organism>
<gene>
    <name evidence="4" type="primary">BZIP4</name>
    <name evidence="6" type="ordered locus">At1g59530</name>
    <name evidence="7" type="ORF">T4M14.10</name>
</gene>